<proteinExistence type="inferred from homology"/>
<evidence type="ECO:0000255" key="1">
    <source>
        <dbReference type="HAMAP-Rule" id="MF_00302"/>
    </source>
</evidence>
<reference key="1">
    <citation type="journal article" date="2008" name="PLoS ONE">
        <title>Genetic basis of virulence attenuation revealed by comparative genomic analysis of Mycobacterium tuberculosis strain H37Ra versus H37Rv.</title>
        <authorList>
            <person name="Zheng H."/>
            <person name="Lu L."/>
            <person name="Wang B."/>
            <person name="Pu S."/>
            <person name="Zhang X."/>
            <person name="Zhu G."/>
            <person name="Shi W."/>
            <person name="Zhang L."/>
            <person name="Wang H."/>
            <person name="Wang S."/>
            <person name="Zhao G."/>
            <person name="Zhang Y."/>
        </authorList>
    </citation>
    <scope>NUCLEOTIDE SEQUENCE [LARGE SCALE GENOMIC DNA]</scope>
    <source>
        <strain>ATCC 25177 / H37Ra</strain>
    </source>
</reference>
<organism>
    <name type="scientific">Mycobacterium tuberculosis (strain ATCC 25177 / H37Ra)</name>
    <dbReference type="NCBI Taxonomy" id="419947"/>
    <lineage>
        <taxon>Bacteria</taxon>
        <taxon>Bacillati</taxon>
        <taxon>Actinomycetota</taxon>
        <taxon>Actinomycetes</taxon>
        <taxon>Mycobacteriales</taxon>
        <taxon>Mycobacteriaceae</taxon>
        <taxon>Mycobacterium</taxon>
        <taxon>Mycobacterium tuberculosis complex</taxon>
    </lineage>
</organism>
<dbReference type="EMBL" id="CP000611">
    <property type="protein sequence ID" value="ABQ73081.1"/>
    <property type="molecule type" value="Genomic_DNA"/>
</dbReference>
<dbReference type="RefSeq" id="WP_003406906.1">
    <property type="nucleotide sequence ID" value="NZ_CP016972.1"/>
</dbReference>
<dbReference type="SMR" id="A5U231"/>
<dbReference type="GeneID" id="45425309"/>
<dbReference type="KEGG" id="mra:MRA_1339"/>
<dbReference type="eggNOG" id="COG2127">
    <property type="taxonomic scope" value="Bacteria"/>
</dbReference>
<dbReference type="HOGENOM" id="CLU_153743_1_0_11"/>
<dbReference type="Proteomes" id="UP000001988">
    <property type="component" value="Chromosome"/>
</dbReference>
<dbReference type="GO" id="GO:0030163">
    <property type="term" value="P:protein catabolic process"/>
    <property type="evidence" value="ECO:0007669"/>
    <property type="project" value="InterPro"/>
</dbReference>
<dbReference type="GO" id="GO:0006508">
    <property type="term" value="P:proteolysis"/>
    <property type="evidence" value="ECO:0007669"/>
    <property type="project" value="UniProtKB-UniRule"/>
</dbReference>
<dbReference type="FunFam" id="3.30.1390.10:FF:000004">
    <property type="entry name" value="ATP-dependent Clp protease adapter protein ClpS"/>
    <property type="match status" value="1"/>
</dbReference>
<dbReference type="Gene3D" id="3.30.1390.10">
    <property type="match status" value="1"/>
</dbReference>
<dbReference type="HAMAP" id="MF_00302">
    <property type="entry name" value="ClpS"/>
    <property type="match status" value="1"/>
</dbReference>
<dbReference type="InterPro" id="IPR022935">
    <property type="entry name" value="ClpS"/>
</dbReference>
<dbReference type="InterPro" id="IPR003769">
    <property type="entry name" value="ClpS_core"/>
</dbReference>
<dbReference type="InterPro" id="IPR014719">
    <property type="entry name" value="Ribosomal_bL12_C/ClpS-like"/>
</dbReference>
<dbReference type="NCBIfam" id="NF000668">
    <property type="entry name" value="PRK00033.1-1"/>
    <property type="match status" value="1"/>
</dbReference>
<dbReference type="Pfam" id="PF02617">
    <property type="entry name" value="ClpS"/>
    <property type="match status" value="1"/>
</dbReference>
<dbReference type="SUPFAM" id="SSF54736">
    <property type="entry name" value="ClpS-like"/>
    <property type="match status" value="1"/>
</dbReference>
<feature type="chain" id="PRO_0000300715" description="ATP-dependent Clp protease adapter protein ClpS">
    <location>
        <begin position="1"/>
        <end position="101"/>
    </location>
</feature>
<protein>
    <recommendedName>
        <fullName evidence="1">ATP-dependent Clp protease adapter protein ClpS</fullName>
    </recommendedName>
</protein>
<accession>A5U231</accession>
<sequence length="101" mass="11222">MAVVSAPAKPGTTWQRESAPVDVTDRAWVTIVWDDPVNLMSYVTYVFQKLFGYSEPHATKLMLQVHNEGKAVVSAGSRESMEVDVSKLHAAGLWATMQQDR</sequence>
<keyword id="KW-1185">Reference proteome</keyword>
<comment type="function">
    <text evidence="1">Involved in the modulation of the specificity of the ClpAP-mediated ATP-dependent protein degradation.</text>
</comment>
<comment type="subunit">
    <text evidence="1">Binds to the N-terminal domain of the chaperone ClpA.</text>
</comment>
<comment type="similarity">
    <text evidence="1">Belongs to the ClpS family.</text>
</comment>
<name>CLPS_MYCTA</name>
<gene>
    <name evidence="1" type="primary">clpS</name>
    <name type="ordered locus">MRA_1339</name>
</gene>